<reference key="1">
    <citation type="journal article" date="2003" name="Nucleic Acids Res.">
        <title>Genome sequence of Chlamydophila caviae (Chlamydia psittaci GPIC): examining the role of niche-specific genes in the evolution of the Chlamydiaceae.</title>
        <authorList>
            <person name="Read T.D."/>
            <person name="Myers G.S.A."/>
            <person name="Brunham R.C."/>
            <person name="Nelson W.C."/>
            <person name="Paulsen I.T."/>
            <person name="Heidelberg J.F."/>
            <person name="Holtzapple E.K."/>
            <person name="Khouri H.M."/>
            <person name="Federova N.B."/>
            <person name="Carty H.A."/>
            <person name="Umayam L.A."/>
            <person name="Haft D.H."/>
            <person name="Peterson J.D."/>
            <person name="Beanan M.J."/>
            <person name="White O."/>
            <person name="Salzberg S.L."/>
            <person name="Hsia R.-C."/>
            <person name="McClarty G."/>
            <person name="Rank R.G."/>
            <person name="Bavoil P.M."/>
            <person name="Fraser C.M."/>
        </authorList>
    </citation>
    <scope>NUCLEOTIDE SEQUENCE [LARGE SCALE GENOMIC DNA]</scope>
    <source>
        <strain>ATCC VR-813 / DSM 19441 / 03DC25 / GPIC</strain>
    </source>
</reference>
<accession>Q821L5</accession>
<comment type="function">
    <text evidence="1">Part of the Sec protein translocase complex. Interacts with the SecYEG preprotein conducting channel. Has a central role in coupling the hydrolysis of ATP to the transfer of proteins into and across the cell membrane, serving as an ATP-driven molecular motor driving the stepwise translocation of polypeptide chains across the membrane.</text>
</comment>
<comment type="catalytic activity">
    <reaction evidence="1">
        <text>ATP + H2O + cellular proteinSide 1 = ADP + phosphate + cellular proteinSide 2.</text>
        <dbReference type="EC" id="7.4.2.8"/>
    </reaction>
</comment>
<comment type="subunit">
    <text evidence="1">Monomer and homodimer. Part of the essential Sec protein translocation apparatus which comprises SecA, SecYEG and auxiliary proteins SecDF. Other proteins may also be involved.</text>
</comment>
<comment type="subcellular location">
    <subcellularLocation>
        <location evidence="1">Cell inner membrane</location>
        <topology evidence="1">Peripheral membrane protein</topology>
        <orientation evidence="1">Cytoplasmic side</orientation>
    </subcellularLocation>
    <subcellularLocation>
        <location evidence="1">Cytoplasm</location>
    </subcellularLocation>
    <text evidence="1">Distribution is 50-50.</text>
</comment>
<comment type="similarity">
    <text evidence="1">Belongs to the SecA family.</text>
</comment>
<keyword id="KW-0067">ATP-binding</keyword>
<keyword id="KW-0997">Cell inner membrane</keyword>
<keyword id="KW-1003">Cell membrane</keyword>
<keyword id="KW-0963">Cytoplasm</keyword>
<keyword id="KW-0472">Membrane</keyword>
<keyword id="KW-0547">Nucleotide-binding</keyword>
<keyword id="KW-0653">Protein transport</keyword>
<keyword id="KW-1278">Translocase</keyword>
<keyword id="KW-0811">Translocation</keyword>
<keyword id="KW-0813">Transport</keyword>
<gene>
    <name evidence="1" type="primary">secA</name>
    <name type="ordered locus">CCA_00925</name>
</gene>
<proteinExistence type="inferred from homology"/>
<protein>
    <recommendedName>
        <fullName evidence="1">Protein translocase subunit SecA</fullName>
        <ecNumber evidence="1">7.4.2.8</ecNumber>
    </recommendedName>
</protein>
<name>SECA_CHLCV</name>
<dbReference type="EC" id="7.4.2.8" evidence="1"/>
<dbReference type="EMBL" id="AE015925">
    <property type="protein sequence ID" value="AAP05664.1"/>
    <property type="molecule type" value="Genomic_DNA"/>
</dbReference>
<dbReference type="RefSeq" id="WP_011006877.1">
    <property type="nucleotide sequence ID" value="NC_003361.3"/>
</dbReference>
<dbReference type="SMR" id="Q821L5"/>
<dbReference type="STRING" id="227941.CCA_00925"/>
<dbReference type="KEGG" id="cca:CCA_00925"/>
<dbReference type="eggNOG" id="COG0653">
    <property type="taxonomic scope" value="Bacteria"/>
</dbReference>
<dbReference type="HOGENOM" id="CLU_005314_3_0_0"/>
<dbReference type="OrthoDB" id="9805579at2"/>
<dbReference type="Proteomes" id="UP000002193">
    <property type="component" value="Chromosome"/>
</dbReference>
<dbReference type="GO" id="GO:0031522">
    <property type="term" value="C:cell envelope Sec protein transport complex"/>
    <property type="evidence" value="ECO:0007669"/>
    <property type="project" value="TreeGrafter"/>
</dbReference>
<dbReference type="GO" id="GO:0005829">
    <property type="term" value="C:cytosol"/>
    <property type="evidence" value="ECO:0007669"/>
    <property type="project" value="TreeGrafter"/>
</dbReference>
<dbReference type="GO" id="GO:0005886">
    <property type="term" value="C:plasma membrane"/>
    <property type="evidence" value="ECO:0007669"/>
    <property type="project" value="UniProtKB-SubCell"/>
</dbReference>
<dbReference type="GO" id="GO:0005524">
    <property type="term" value="F:ATP binding"/>
    <property type="evidence" value="ECO:0007669"/>
    <property type="project" value="UniProtKB-UniRule"/>
</dbReference>
<dbReference type="GO" id="GO:0008564">
    <property type="term" value="F:protein-exporting ATPase activity"/>
    <property type="evidence" value="ECO:0007669"/>
    <property type="project" value="UniProtKB-EC"/>
</dbReference>
<dbReference type="GO" id="GO:0065002">
    <property type="term" value="P:intracellular protein transmembrane transport"/>
    <property type="evidence" value="ECO:0007669"/>
    <property type="project" value="UniProtKB-UniRule"/>
</dbReference>
<dbReference type="GO" id="GO:0017038">
    <property type="term" value="P:protein import"/>
    <property type="evidence" value="ECO:0007669"/>
    <property type="project" value="InterPro"/>
</dbReference>
<dbReference type="GO" id="GO:0006605">
    <property type="term" value="P:protein targeting"/>
    <property type="evidence" value="ECO:0007669"/>
    <property type="project" value="UniProtKB-UniRule"/>
</dbReference>
<dbReference type="GO" id="GO:0043952">
    <property type="term" value="P:protein transport by the Sec complex"/>
    <property type="evidence" value="ECO:0007669"/>
    <property type="project" value="TreeGrafter"/>
</dbReference>
<dbReference type="CDD" id="cd17928">
    <property type="entry name" value="DEXDc_SecA"/>
    <property type="match status" value="1"/>
</dbReference>
<dbReference type="CDD" id="cd18803">
    <property type="entry name" value="SF2_C_secA"/>
    <property type="match status" value="1"/>
</dbReference>
<dbReference type="FunFam" id="3.40.50.300:FF:000429">
    <property type="entry name" value="Preprotein translocase subunit SecA"/>
    <property type="match status" value="1"/>
</dbReference>
<dbReference type="FunFam" id="3.40.50.300:FF:000787">
    <property type="entry name" value="Protein translocase subunit SecA"/>
    <property type="match status" value="1"/>
</dbReference>
<dbReference type="Gene3D" id="1.10.3060.10">
    <property type="entry name" value="Helical scaffold and wing domains of SecA"/>
    <property type="match status" value="1"/>
</dbReference>
<dbReference type="Gene3D" id="3.40.50.300">
    <property type="entry name" value="P-loop containing nucleotide triphosphate hydrolases"/>
    <property type="match status" value="2"/>
</dbReference>
<dbReference type="Gene3D" id="3.90.1440.10">
    <property type="entry name" value="SecA, preprotein cross-linking domain"/>
    <property type="match status" value="1"/>
</dbReference>
<dbReference type="HAMAP" id="MF_01382">
    <property type="entry name" value="SecA"/>
    <property type="match status" value="1"/>
</dbReference>
<dbReference type="InterPro" id="IPR014001">
    <property type="entry name" value="Helicase_ATP-bd"/>
</dbReference>
<dbReference type="InterPro" id="IPR001650">
    <property type="entry name" value="Helicase_C-like"/>
</dbReference>
<dbReference type="InterPro" id="IPR027417">
    <property type="entry name" value="P-loop_NTPase"/>
</dbReference>
<dbReference type="InterPro" id="IPR000185">
    <property type="entry name" value="SecA"/>
</dbReference>
<dbReference type="InterPro" id="IPR020937">
    <property type="entry name" value="SecA_CS"/>
</dbReference>
<dbReference type="InterPro" id="IPR011115">
    <property type="entry name" value="SecA_DEAD"/>
</dbReference>
<dbReference type="InterPro" id="IPR014018">
    <property type="entry name" value="SecA_motor_DEAD"/>
</dbReference>
<dbReference type="InterPro" id="IPR011130">
    <property type="entry name" value="SecA_preprotein_X-link_dom"/>
</dbReference>
<dbReference type="InterPro" id="IPR044722">
    <property type="entry name" value="SecA_SF2_C"/>
</dbReference>
<dbReference type="InterPro" id="IPR011116">
    <property type="entry name" value="SecA_Wing/Scaffold"/>
</dbReference>
<dbReference type="InterPro" id="IPR036266">
    <property type="entry name" value="SecA_Wing/Scaffold_sf"/>
</dbReference>
<dbReference type="InterPro" id="IPR036670">
    <property type="entry name" value="SecA_X-link_sf"/>
</dbReference>
<dbReference type="NCBIfam" id="TIGR00963">
    <property type="entry name" value="secA"/>
    <property type="match status" value="1"/>
</dbReference>
<dbReference type="PANTHER" id="PTHR30612:SF0">
    <property type="entry name" value="CHLOROPLAST PROTEIN-TRANSPORTING ATPASE"/>
    <property type="match status" value="1"/>
</dbReference>
<dbReference type="PANTHER" id="PTHR30612">
    <property type="entry name" value="SECA INNER MEMBRANE COMPONENT OF SEC PROTEIN SECRETION SYSTEM"/>
    <property type="match status" value="1"/>
</dbReference>
<dbReference type="Pfam" id="PF21090">
    <property type="entry name" value="P-loop_SecA"/>
    <property type="match status" value="1"/>
</dbReference>
<dbReference type="Pfam" id="PF07517">
    <property type="entry name" value="SecA_DEAD"/>
    <property type="match status" value="1"/>
</dbReference>
<dbReference type="Pfam" id="PF01043">
    <property type="entry name" value="SecA_PP_bind"/>
    <property type="match status" value="1"/>
</dbReference>
<dbReference type="Pfam" id="PF07516">
    <property type="entry name" value="SecA_SW"/>
    <property type="match status" value="1"/>
</dbReference>
<dbReference type="PRINTS" id="PR00906">
    <property type="entry name" value="SECA"/>
</dbReference>
<dbReference type="SMART" id="SM00957">
    <property type="entry name" value="SecA_DEAD"/>
    <property type="match status" value="1"/>
</dbReference>
<dbReference type="SMART" id="SM00958">
    <property type="entry name" value="SecA_PP_bind"/>
    <property type="match status" value="1"/>
</dbReference>
<dbReference type="SUPFAM" id="SSF81886">
    <property type="entry name" value="Helical scaffold and wing domains of SecA"/>
    <property type="match status" value="1"/>
</dbReference>
<dbReference type="SUPFAM" id="SSF52540">
    <property type="entry name" value="P-loop containing nucleoside triphosphate hydrolases"/>
    <property type="match status" value="2"/>
</dbReference>
<dbReference type="SUPFAM" id="SSF81767">
    <property type="entry name" value="Pre-protein crosslinking domain of SecA"/>
    <property type="match status" value="1"/>
</dbReference>
<dbReference type="PROSITE" id="PS01312">
    <property type="entry name" value="SECA"/>
    <property type="match status" value="1"/>
</dbReference>
<dbReference type="PROSITE" id="PS51196">
    <property type="entry name" value="SECA_MOTOR_DEAD"/>
    <property type="match status" value="1"/>
</dbReference>
<evidence type="ECO:0000255" key="1">
    <source>
        <dbReference type="HAMAP-Rule" id="MF_01382"/>
    </source>
</evidence>
<organism>
    <name type="scientific">Chlamydia caviae (strain ATCC VR-813 / DSM 19441 / 03DC25 / GPIC)</name>
    <name type="common">Chlamydophila caviae</name>
    <dbReference type="NCBI Taxonomy" id="227941"/>
    <lineage>
        <taxon>Bacteria</taxon>
        <taxon>Pseudomonadati</taxon>
        <taxon>Chlamydiota</taxon>
        <taxon>Chlamydiia</taxon>
        <taxon>Chlamydiales</taxon>
        <taxon>Chlamydiaceae</taxon>
        <taxon>Chlamydia/Chlamydophila group</taxon>
        <taxon>Chlamydia</taxon>
    </lineage>
</organism>
<sequence length="970" mass="111242">MLDFLKRFFGSSQERTLKKFQKLVDKVNLYDEMLAPLSDEELRNKTVELKKRYQEGESLDDMLPEAYAVVKNVCRRLTGTPVEVSGYHQNWDMVPYDVQILGAIAMHKGFITEMQTGEGKTLTAVMPLYLNALTGKPVHLVTVNDYLAQRDCEWVGSILRWLGLTTGVLIAGSPLEKRKEIYRCDVVYGTASEFGFDYLRDNSIATSVDEQVGRGFYFAIIDEVDSILIDEARTPLIISGPGEKHNPVYFELKDKVAGLVQLQRELCNQLALEARRGLELYLDMDILPKDKKVVEGISEFCRSLWLVSKGMPLNRVLRRVREHPDLRAMIDKWDIYYHAEQNKEESIEQLSQLYIIVDEHNNDFELTDRGMQQWVDKAGGSAEDFVMMDMGHEYSLIDSDESLSPTDKINRKIAVSEEDTQRKARAHGLRQLLRAQLLMERDVDYIVRDDQIIIIDEHTGRPQPGRRFSEGLHQAIEAKEHVTIRKESQTFATVTLQNFFRLYEKLAGMTGTAITESKEFKEIYNLYVLQVPTFKTCLRIDHNDEFYMTEREKYHAIVNEIARVHKEGNPILIGTESVEVSEKLSRILKQNRIDHTVLNAKNHAQEAEIIAAAGKLGAVTVATNMAGRGTDIKLDEEAVVVGGLHVIGTSRHQSRRIDRQLRGRCARLGDPGAAKFFLSFEDRLMRLFASPKLNALIRHFRPPEGEAMSDPMFNKLIETAQKRVEARNYTIRKHTLEYDDVMNKQRQTIYAFRNEIIRSEDVFPLAKEAIYHVSLMIASLITSRNHPTGHSLPNLEEWMNYSFPIKLNLDELRKLTTLDAIAEQVAEDLIEVFQNKFSSMVEEITTAAGDDVDAKGICRDIIRSVMIMHIDEQWKIHLVDMDLLRSEVGLRTVGQKDPLIEFKHESFLLFESLVRDIRIAIVKHLFRLELTMTREQRPQNVIPVVATSFQNDENFGPMELTVISDADDDE</sequence>
<feature type="chain" id="PRO_1000073469" description="Protein translocase subunit SecA">
    <location>
        <begin position="1"/>
        <end position="970"/>
    </location>
</feature>
<feature type="binding site" evidence="1">
    <location>
        <position position="99"/>
    </location>
    <ligand>
        <name>ATP</name>
        <dbReference type="ChEBI" id="CHEBI:30616"/>
    </ligand>
</feature>
<feature type="binding site" evidence="1">
    <location>
        <begin position="117"/>
        <end position="121"/>
    </location>
    <ligand>
        <name>ATP</name>
        <dbReference type="ChEBI" id="CHEBI:30616"/>
    </ligand>
</feature>
<feature type="binding site" evidence="1">
    <location>
        <position position="631"/>
    </location>
    <ligand>
        <name>ATP</name>
        <dbReference type="ChEBI" id="CHEBI:30616"/>
    </ligand>
</feature>